<keyword id="KW-1003">Cell membrane</keyword>
<keyword id="KW-0868">Chloride</keyword>
<keyword id="KW-0869">Chloride channel</keyword>
<keyword id="KW-1015">Disulfide bond</keyword>
<keyword id="KW-0325">Glycoprotein</keyword>
<keyword id="KW-0407">Ion channel</keyword>
<keyword id="KW-0406">Ion transport</keyword>
<keyword id="KW-1071">Ligand-gated ion channel</keyword>
<keyword id="KW-0472">Membrane</keyword>
<keyword id="KW-0628">Postsynaptic cell membrane</keyword>
<keyword id="KW-0675">Receptor</keyword>
<keyword id="KW-0732">Signal</keyword>
<keyword id="KW-0770">Synapse</keyword>
<keyword id="KW-0812">Transmembrane</keyword>
<keyword id="KW-1133">Transmembrane helix</keyword>
<keyword id="KW-0813">Transport</keyword>
<sequence>MWGIIVPFFSASLMCSLVAVVRCQQDTDHFANVTNTIDSLLKGYDIRLRPSFGGAPLEIGIEVILASFDSISEVDMDYTITMYLNQYWRDERLQFIFNESLDLGENRSVTTMTLTGAFAEKIWVPDTFLANDKNSFLHDITEKNKMVRLYGNGSLVYGMRFTTTLACMMDLHNYPLDHQECTVEIESYGYTMDDIVLYWLNDRGAVTGVEDVSLPQFSITNYATINKIEELSTGDYQRLSLIFQLQRNIGYFIFQTYLPSILIVMLSWVSFWINHEATSARVALGITTVLTMTTISNGVRSSLPRISYVKAIDIYLVMCFVFVFAALLEYAAVNYTYWGARAKRKAKRLRERATSVRKRVDDGDQMNNTNMDTVELKEVHMVPTSVGVTNSQSFNLDLDDGSGDDTGFRVVPPIPRSFTHSHATTHGYIPTNVVRRRSSSHVPPRRRRLLSHFRQKAKSIKVKIPRVQDVNTIDKYARLMFPLLFIIFNTSYWSVYLLT</sequence>
<proteinExistence type="evidence at transcript level"/>
<feature type="signal peptide" evidence="2">
    <location>
        <begin position="1"/>
        <end position="23"/>
    </location>
</feature>
<feature type="chain" id="PRO_0000000467" description="Gamma-aminobutyric acid receptor subunit beta">
    <location>
        <begin position="24"/>
        <end position="499"/>
    </location>
</feature>
<feature type="topological domain" description="Extracellular" evidence="3">
    <location>
        <begin position="24"/>
        <end position="251"/>
    </location>
</feature>
<feature type="transmembrane region" description="Helical" evidence="3">
    <location>
        <begin position="252"/>
        <end position="273"/>
    </location>
</feature>
<feature type="transmembrane region" description="Helical" evidence="3">
    <location>
        <begin position="278"/>
        <end position="299"/>
    </location>
</feature>
<feature type="transmembrane region" description="Helical" evidence="3">
    <location>
        <begin position="311"/>
        <end position="333"/>
    </location>
</feature>
<feature type="topological domain" description="Cytoplasmic" evidence="3">
    <location>
        <begin position="334"/>
        <end position="475"/>
    </location>
</feature>
<feature type="transmembrane region" description="Helical" evidence="3">
    <location>
        <begin position="476"/>
        <end position="499"/>
    </location>
</feature>
<feature type="glycosylation site" description="N-linked (GlcNAc...) asparagine" evidence="2">
    <location>
        <position position="32"/>
    </location>
</feature>
<feature type="glycosylation site" description="N-linked (GlcNAc...) asparagine" evidence="2">
    <location>
        <position position="98"/>
    </location>
</feature>
<feature type="glycosylation site" description="N-linked (GlcNAc...) asparagine" evidence="2">
    <location>
        <position position="106"/>
    </location>
</feature>
<feature type="glycosylation site" description="N-linked (GlcNAc...) asparagine" evidence="2">
    <location>
        <position position="152"/>
    </location>
</feature>
<feature type="disulfide bond" evidence="1">
    <location>
        <begin position="167"/>
        <end position="181"/>
    </location>
</feature>
<feature type="sequence conflict" description="In Ref. 2; no nucleotide entry." evidence="3" ref="2">
    <original>S</original>
    <variation>L</variation>
    <location>
        <position position="232"/>
    </location>
</feature>
<name>GBRB_LYMST</name>
<organism>
    <name type="scientific">Lymnaea stagnalis</name>
    <name type="common">Great pond snail</name>
    <name type="synonym">Helix stagnalis</name>
    <dbReference type="NCBI Taxonomy" id="6523"/>
    <lineage>
        <taxon>Eukaryota</taxon>
        <taxon>Metazoa</taxon>
        <taxon>Spiralia</taxon>
        <taxon>Lophotrochozoa</taxon>
        <taxon>Mollusca</taxon>
        <taxon>Gastropoda</taxon>
        <taxon>Heterobranchia</taxon>
        <taxon>Euthyneura</taxon>
        <taxon>Panpulmonata</taxon>
        <taxon>Hygrophila</taxon>
        <taxon>Lymnaeoidea</taxon>
        <taxon>Lymnaeidae</taxon>
        <taxon>Lymnaea</taxon>
    </lineage>
</organism>
<comment type="function">
    <text>GABA, an inhibitory neurotransmitter, mediates neuronal inhibition by binding to the GABA/benzodiazepine receptor and opening an integral chloride channel.</text>
</comment>
<comment type="subunit">
    <text>Generally pentameric. There are five types of GABA(A) receptor chains: alpha, beta, gamma, delta, and rho.</text>
</comment>
<comment type="subcellular location">
    <subcellularLocation>
        <location>Postsynaptic cell membrane</location>
        <topology>Multi-pass membrane protein</topology>
    </subcellularLocation>
    <subcellularLocation>
        <location>Cell membrane</location>
        <topology>Multi-pass membrane protein</topology>
    </subcellularLocation>
</comment>
<comment type="similarity">
    <text evidence="3">Belongs to the ligand-gated ion channel (TC 1.A.9) family. Gamma-aminobutyric acid receptor (TC 1.A.9.5) subfamily.</text>
</comment>
<evidence type="ECO:0000250" key="1"/>
<evidence type="ECO:0000255" key="2"/>
<evidence type="ECO:0000305" key="3"/>
<dbReference type="EMBL" id="X58638">
    <property type="protein sequence ID" value="CAA41495.1"/>
    <property type="molecule type" value="mRNA"/>
</dbReference>
<dbReference type="PIR" id="S17785">
    <property type="entry name" value="S17785"/>
</dbReference>
<dbReference type="SMR" id="P26714"/>
<dbReference type="TCDB" id="1.A.9.5.13">
    <property type="family name" value="the neurotransmitter receptor, cys loop, ligand-gated ion channel (lic) family"/>
</dbReference>
<dbReference type="GO" id="GO:0034707">
    <property type="term" value="C:chloride channel complex"/>
    <property type="evidence" value="ECO:0007669"/>
    <property type="project" value="UniProtKB-KW"/>
</dbReference>
<dbReference type="GO" id="GO:0045211">
    <property type="term" value="C:postsynaptic membrane"/>
    <property type="evidence" value="ECO:0007669"/>
    <property type="project" value="UniProtKB-SubCell"/>
</dbReference>
<dbReference type="GO" id="GO:0005254">
    <property type="term" value="F:chloride channel activity"/>
    <property type="evidence" value="ECO:0007669"/>
    <property type="project" value="UniProtKB-KW"/>
</dbReference>
<dbReference type="GO" id="GO:0005230">
    <property type="term" value="F:extracellular ligand-gated monoatomic ion channel activity"/>
    <property type="evidence" value="ECO:0007669"/>
    <property type="project" value="InterPro"/>
</dbReference>
<dbReference type="GO" id="GO:0004890">
    <property type="term" value="F:GABA-A receptor activity"/>
    <property type="evidence" value="ECO:0007669"/>
    <property type="project" value="InterPro"/>
</dbReference>
<dbReference type="CDD" id="cd19006">
    <property type="entry name" value="LGIC_ECD_GABAAR_LCCH3-like"/>
    <property type="match status" value="1"/>
</dbReference>
<dbReference type="CDD" id="cd19049">
    <property type="entry name" value="LGIC_TM_anion"/>
    <property type="match status" value="1"/>
</dbReference>
<dbReference type="FunFam" id="2.70.170.10:FF:000021">
    <property type="entry name" value="Gamma-aminobutyric acid receptor isoform 3b"/>
    <property type="match status" value="1"/>
</dbReference>
<dbReference type="FunFam" id="1.20.58.390:FF:000040">
    <property type="entry name" value="Gamma-aminobutyric acid receptor subunit beta-like"/>
    <property type="match status" value="1"/>
</dbReference>
<dbReference type="Gene3D" id="2.70.170.10">
    <property type="entry name" value="Neurotransmitter-gated ion-channel ligand-binding domain"/>
    <property type="match status" value="1"/>
</dbReference>
<dbReference type="Gene3D" id="1.20.58.390">
    <property type="entry name" value="Neurotransmitter-gated ion-channel transmembrane domain"/>
    <property type="match status" value="1"/>
</dbReference>
<dbReference type="InterPro" id="IPR006028">
    <property type="entry name" value="GABAA/Glycine_rcpt"/>
</dbReference>
<dbReference type="InterPro" id="IPR001390">
    <property type="entry name" value="GABAAa_rcpt"/>
</dbReference>
<dbReference type="InterPro" id="IPR006202">
    <property type="entry name" value="Neur_chan_lig-bd"/>
</dbReference>
<dbReference type="InterPro" id="IPR036734">
    <property type="entry name" value="Neur_chan_lig-bd_sf"/>
</dbReference>
<dbReference type="InterPro" id="IPR006201">
    <property type="entry name" value="Neur_channel"/>
</dbReference>
<dbReference type="InterPro" id="IPR036719">
    <property type="entry name" value="Neuro-gated_channel_TM_sf"/>
</dbReference>
<dbReference type="InterPro" id="IPR038050">
    <property type="entry name" value="Neuro_actylchol_rec"/>
</dbReference>
<dbReference type="InterPro" id="IPR006029">
    <property type="entry name" value="Neurotrans-gated_channel_TM"/>
</dbReference>
<dbReference type="InterPro" id="IPR018000">
    <property type="entry name" value="Neurotransmitter_ion_chnl_CS"/>
</dbReference>
<dbReference type="NCBIfam" id="TIGR00860">
    <property type="entry name" value="LIC"/>
    <property type="match status" value="1"/>
</dbReference>
<dbReference type="PANTHER" id="PTHR18945">
    <property type="entry name" value="NEUROTRANSMITTER GATED ION CHANNEL"/>
    <property type="match status" value="1"/>
</dbReference>
<dbReference type="Pfam" id="PF02931">
    <property type="entry name" value="Neur_chan_LBD"/>
    <property type="match status" value="1"/>
</dbReference>
<dbReference type="Pfam" id="PF02932">
    <property type="entry name" value="Neur_chan_memb"/>
    <property type="match status" value="1"/>
</dbReference>
<dbReference type="PRINTS" id="PR01079">
    <property type="entry name" value="GABAARALPHA"/>
</dbReference>
<dbReference type="PRINTS" id="PR00253">
    <property type="entry name" value="GABAARECEPTR"/>
</dbReference>
<dbReference type="PRINTS" id="PR00252">
    <property type="entry name" value="NRIONCHANNEL"/>
</dbReference>
<dbReference type="SUPFAM" id="SSF90112">
    <property type="entry name" value="Neurotransmitter-gated ion-channel transmembrane pore"/>
    <property type="match status" value="1"/>
</dbReference>
<dbReference type="SUPFAM" id="SSF63712">
    <property type="entry name" value="Nicotinic receptor ligand binding domain-like"/>
    <property type="match status" value="1"/>
</dbReference>
<dbReference type="PROSITE" id="PS00236">
    <property type="entry name" value="NEUROTR_ION_CHANNEL"/>
    <property type="match status" value="1"/>
</dbReference>
<reference key="1">
    <citation type="journal article" date="1991" name="EMBO J.">
        <title>Sequence of a functional invertebrate GABAA receptor subunit which can form a chimeric receptor with a vertebrate alpha subunit.</title>
        <authorList>
            <person name="Harvey R.J."/>
            <person name="Vreugdenhil E."/>
            <person name="Zaman S.H."/>
            <person name="Bhandal N.S."/>
            <person name="Usherwood P.N.R."/>
            <person name="Barnard E.A."/>
            <person name="Darlison M.G."/>
        </authorList>
    </citation>
    <scope>NUCLEOTIDE SEQUENCE [MRNA]</scope>
</reference>
<reference key="2">
    <citation type="journal article" date="1990" name="Biochem. Soc. Trans.">
        <title>Cloning of genomic and cDNA sequences encoding an invertebrate gamma-aminobutyric acid A receptor subunit.</title>
        <authorList>
            <person name="Harvey R.J."/>
            <person name="Vreugdenhil E."/>
            <person name="Barnard E.A."/>
            <person name="Darlison M.G."/>
        </authorList>
    </citation>
    <scope>NUCLEOTIDE SEQUENCE [MRNA] OF 201-334</scope>
</reference>
<accession>P26714</accession>
<protein>
    <recommendedName>
        <fullName>Gamma-aminobutyric acid receptor subunit beta</fullName>
    </recommendedName>
    <alternativeName>
        <fullName>GABA(A) receptor</fullName>
    </alternativeName>
</protein>